<sequence length="104" mass="11443">MAIVKVTDSDFDSKIESGVKLVDFWATWCGPCKMIAPVLEELAGDYDGKADILKLDVDENPSTAAKYEVMSIPTLIVFKDGEPVDKVVGFQPKENLAEVLDKHL</sequence>
<protein>
    <recommendedName>
        <fullName>Thioredoxin</fullName>
        <shortName>Trx</shortName>
    </recommendedName>
</protein>
<dbReference type="EMBL" id="CP000029">
    <property type="protein sequence ID" value="AAW54101.1"/>
    <property type="molecule type" value="Genomic_DNA"/>
</dbReference>
<dbReference type="RefSeq" id="WP_001830148.1">
    <property type="nucleotide sequence ID" value="NC_002976.3"/>
</dbReference>
<dbReference type="SMR" id="Q5HQ29"/>
<dbReference type="STRING" id="176279.SERP0728"/>
<dbReference type="GeneID" id="50019024"/>
<dbReference type="KEGG" id="ser:SERP0728"/>
<dbReference type="eggNOG" id="COG3118">
    <property type="taxonomic scope" value="Bacteria"/>
</dbReference>
<dbReference type="HOGENOM" id="CLU_090389_10_2_9"/>
<dbReference type="Proteomes" id="UP000000531">
    <property type="component" value="Chromosome"/>
</dbReference>
<dbReference type="GO" id="GO:0005829">
    <property type="term" value="C:cytosol"/>
    <property type="evidence" value="ECO:0007669"/>
    <property type="project" value="TreeGrafter"/>
</dbReference>
<dbReference type="GO" id="GO:0015035">
    <property type="term" value="F:protein-disulfide reductase activity"/>
    <property type="evidence" value="ECO:0007669"/>
    <property type="project" value="InterPro"/>
</dbReference>
<dbReference type="GO" id="GO:0045454">
    <property type="term" value="P:cell redox homeostasis"/>
    <property type="evidence" value="ECO:0007669"/>
    <property type="project" value="TreeGrafter"/>
</dbReference>
<dbReference type="CDD" id="cd02947">
    <property type="entry name" value="TRX_family"/>
    <property type="match status" value="1"/>
</dbReference>
<dbReference type="FunFam" id="3.40.30.10:FF:000001">
    <property type="entry name" value="Thioredoxin"/>
    <property type="match status" value="1"/>
</dbReference>
<dbReference type="Gene3D" id="3.40.30.10">
    <property type="entry name" value="Glutaredoxin"/>
    <property type="match status" value="1"/>
</dbReference>
<dbReference type="InterPro" id="IPR005746">
    <property type="entry name" value="Thioredoxin"/>
</dbReference>
<dbReference type="InterPro" id="IPR036249">
    <property type="entry name" value="Thioredoxin-like_sf"/>
</dbReference>
<dbReference type="InterPro" id="IPR017937">
    <property type="entry name" value="Thioredoxin_CS"/>
</dbReference>
<dbReference type="InterPro" id="IPR013766">
    <property type="entry name" value="Thioredoxin_domain"/>
</dbReference>
<dbReference type="NCBIfam" id="TIGR01068">
    <property type="entry name" value="thioredoxin"/>
    <property type="match status" value="1"/>
</dbReference>
<dbReference type="PANTHER" id="PTHR45663">
    <property type="entry name" value="GEO12009P1"/>
    <property type="match status" value="1"/>
</dbReference>
<dbReference type="PANTHER" id="PTHR45663:SF11">
    <property type="entry name" value="GEO12009P1"/>
    <property type="match status" value="1"/>
</dbReference>
<dbReference type="Pfam" id="PF00085">
    <property type="entry name" value="Thioredoxin"/>
    <property type="match status" value="1"/>
</dbReference>
<dbReference type="PIRSF" id="PIRSF000077">
    <property type="entry name" value="Thioredoxin"/>
    <property type="match status" value="1"/>
</dbReference>
<dbReference type="PRINTS" id="PR00421">
    <property type="entry name" value="THIOREDOXIN"/>
</dbReference>
<dbReference type="SUPFAM" id="SSF52833">
    <property type="entry name" value="Thioredoxin-like"/>
    <property type="match status" value="1"/>
</dbReference>
<dbReference type="PROSITE" id="PS00194">
    <property type="entry name" value="THIOREDOXIN_1"/>
    <property type="match status" value="1"/>
</dbReference>
<dbReference type="PROSITE" id="PS51352">
    <property type="entry name" value="THIOREDOXIN_2"/>
    <property type="match status" value="1"/>
</dbReference>
<accession>Q5HQ29</accession>
<feature type="chain" id="PRO_0000120133" description="Thioredoxin">
    <location>
        <begin position="1"/>
        <end position="104"/>
    </location>
</feature>
<feature type="domain" description="Thioredoxin" evidence="2">
    <location>
        <begin position="2"/>
        <end position="104"/>
    </location>
</feature>
<feature type="disulfide bond" description="Redox-active" evidence="2">
    <location>
        <begin position="29"/>
        <end position="32"/>
    </location>
</feature>
<proteinExistence type="inferred from homology"/>
<evidence type="ECO:0000250" key="1"/>
<evidence type="ECO:0000255" key="2">
    <source>
        <dbReference type="PROSITE-ProRule" id="PRU00691"/>
    </source>
</evidence>
<evidence type="ECO:0000305" key="3"/>
<organism>
    <name type="scientific">Staphylococcus epidermidis (strain ATCC 35984 / DSM 28319 / BCRC 17069 / CCUG 31568 / BM 3577 / RP62A)</name>
    <dbReference type="NCBI Taxonomy" id="176279"/>
    <lineage>
        <taxon>Bacteria</taxon>
        <taxon>Bacillati</taxon>
        <taxon>Bacillota</taxon>
        <taxon>Bacilli</taxon>
        <taxon>Bacillales</taxon>
        <taxon>Staphylococcaceae</taxon>
        <taxon>Staphylococcus</taxon>
    </lineage>
</organism>
<comment type="function">
    <text evidence="1">Component of the thioredoxin-thioredoxin reductase system. Participates in various redox reactions through the reversible oxidation of its active center dithiol to a disulfide and catalyzes dithiol-disulfide exchange reactions (By similarity).</text>
</comment>
<comment type="similarity">
    <text evidence="3">Belongs to the thioredoxin family.</text>
</comment>
<reference key="1">
    <citation type="journal article" date="2005" name="J. Bacteriol.">
        <title>Insights on evolution of virulence and resistance from the complete genome analysis of an early methicillin-resistant Staphylococcus aureus strain and a biofilm-producing methicillin-resistant Staphylococcus epidermidis strain.</title>
        <authorList>
            <person name="Gill S.R."/>
            <person name="Fouts D.E."/>
            <person name="Archer G.L."/>
            <person name="Mongodin E.F."/>
            <person name="DeBoy R.T."/>
            <person name="Ravel J."/>
            <person name="Paulsen I.T."/>
            <person name="Kolonay J.F."/>
            <person name="Brinkac L.M."/>
            <person name="Beanan M.J."/>
            <person name="Dodson R.J."/>
            <person name="Daugherty S.C."/>
            <person name="Madupu R."/>
            <person name="Angiuoli S.V."/>
            <person name="Durkin A.S."/>
            <person name="Haft D.H."/>
            <person name="Vamathevan J.J."/>
            <person name="Khouri H."/>
            <person name="Utterback T.R."/>
            <person name="Lee C."/>
            <person name="Dimitrov G."/>
            <person name="Jiang L."/>
            <person name="Qin H."/>
            <person name="Weidman J."/>
            <person name="Tran K."/>
            <person name="Kang K.H."/>
            <person name="Hance I.R."/>
            <person name="Nelson K.E."/>
            <person name="Fraser C.M."/>
        </authorList>
    </citation>
    <scope>NUCLEOTIDE SEQUENCE [LARGE SCALE GENOMIC DNA]</scope>
    <source>
        <strain>ATCC 35984 / DSM 28319 / BCRC 17069 / CCUG 31568 / BM 3577 / RP62A</strain>
    </source>
</reference>
<gene>
    <name type="primary">trxA</name>
    <name type="ordered locus">SERP0728</name>
</gene>
<keyword id="KW-1015">Disulfide bond</keyword>
<keyword id="KW-0249">Electron transport</keyword>
<keyword id="KW-0676">Redox-active center</keyword>
<keyword id="KW-1185">Reference proteome</keyword>
<keyword id="KW-0813">Transport</keyword>
<name>THIO_STAEQ</name>